<comment type="function">
    <text evidence="2">Transamidinase that catalyzes the transfer of the amidino group of L-arginine onto the amino moiety of acceptor metabolites such as glycine, beta-alanine, gamma-aminobutyric acid (GABA) and taurine yielding the corresponding guanidine derivatives (By similarity). Catalyzes the rate-limiting step of creatine biosynthesis, namely the transfer of the amidino group from L-arginine to glycine to generate guanidinoacetate, which is then methylated by GAMT to form creatine. Provides creatine as a source for ATP generation in tissues with high energy demands, in particular skeletal muscle, heart and brain (By similarity).</text>
</comment>
<comment type="catalytic activity">
    <reaction evidence="2">
        <text>L-arginine + glycine = guanidinoacetate + L-ornithine</text>
        <dbReference type="Rhea" id="RHEA:13201"/>
        <dbReference type="ChEBI" id="CHEBI:32682"/>
        <dbReference type="ChEBI" id="CHEBI:46911"/>
        <dbReference type="ChEBI" id="CHEBI:57305"/>
        <dbReference type="ChEBI" id="CHEBI:57742"/>
        <dbReference type="EC" id="2.1.4.1"/>
    </reaction>
    <physiologicalReaction direction="left-to-right" evidence="2">
        <dbReference type="Rhea" id="RHEA:13202"/>
    </physiologicalReaction>
</comment>
<comment type="catalytic activity">
    <reaction evidence="2">
        <text>4-aminobutanoate + L-arginine = 4-guanidinobutanoate + L-ornithine</text>
        <dbReference type="Rhea" id="RHEA:75939"/>
        <dbReference type="ChEBI" id="CHEBI:32682"/>
        <dbReference type="ChEBI" id="CHEBI:46911"/>
        <dbReference type="ChEBI" id="CHEBI:57486"/>
        <dbReference type="ChEBI" id="CHEBI:59888"/>
    </reaction>
    <physiologicalReaction direction="left-to-right" evidence="2">
        <dbReference type="Rhea" id="RHEA:75940"/>
    </physiologicalReaction>
</comment>
<comment type="catalytic activity">
    <reaction evidence="2">
        <text>beta-alanine + L-arginine = 3-guanidinopropanoate + L-ornithine</text>
        <dbReference type="Rhea" id="RHEA:75943"/>
        <dbReference type="ChEBI" id="CHEBI:32682"/>
        <dbReference type="ChEBI" id="CHEBI:46911"/>
        <dbReference type="ChEBI" id="CHEBI:57593"/>
        <dbReference type="ChEBI" id="CHEBI:57966"/>
    </reaction>
    <physiologicalReaction direction="left-to-right" evidence="2">
        <dbReference type="Rhea" id="RHEA:75944"/>
    </physiologicalReaction>
</comment>
<comment type="catalytic activity">
    <reaction evidence="2">
        <text>taurine + L-arginine = taurocyamine + L-ornithine</text>
        <dbReference type="Rhea" id="RHEA:75947"/>
        <dbReference type="ChEBI" id="CHEBI:32682"/>
        <dbReference type="ChEBI" id="CHEBI:46911"/>
        <dbReference type="ChEBI" id="CHEBI:58064"/>
        <dbReference type="ChEBI" id="CHEBI:507393"/>
    </reaction>
    <physiologicalReaction direction="left-to-right" evidence="2">
        <dbReference type="Rhea" id="RHEA:75948"/>
    </physiologicalReaction>
</comment>
<comment type="pathway">
    <text evidence="2">Amine and polyamine biosynthesis; creatine biosynthesis; creatine from L-arginine and glycine: step 1/2.</text>
</comment>
<comment type="subunit">
    <text evidence="2">Homodimer.</text>
</comment>
<comment type="subcellular location">
    <subcellularLocation>
        <location evidence="1">Mitochondrion inner membrane</location>
    </subcellularLocation>
</comment>
<comment type="tissue specificity">
    <text evidence="3">Kidney. Expressed biallelically in placenta.</text>
</comment>
<comment type="developmental stage">
    <text evidence="3">Expressed in placenta on days 75 and 90 of gestation.</text>
</comment>
<comment type="similarity">
    <text evidence="5">Belongs to the amidinotransferase family.</text>
</comment>
<accession>P50441</accession>
<accession>B3F4S6</accession>
<accession>Q6IU00</accession>
<name>GATM_PIG</name>
<proteinExistence type="evidence at protein level"/>
<protein>
    <recommendedName>
        <fullName>Glycine amidinotransferase, mitochondrial</fullName>
        <ecNumber evidence="2">2.1.4.1</ecNumber>
    </recommendedName>
    <alternativeName>
        <fullName>L-arginine:glycine amidinotransferase</fullName>
    </alternativeName>
    <alternativeName>
        <fullName>Transamidinase</fullName>
    </alternativeName>
</protein>
<sequence length="423" mass="48360">MLRVRCLRGGSRGAEALHYIGSRLGRTVTGWVQRTFQSTQAATASSGNSCAADDKATDPLPKDCPVSSYNEWDPLEEVIVGRAENACVPPFTVEVKANTYEKYWPFYQKYGGHYFPKDHLKKAVAEIEEMCNILKMEGVTVRRPDPIDWSVKYKTPDFESTGLYGAMPRDILIVVGNEIIEAPMAWRARFFEYRAYRSIIKDYFRRGAKWTTAPKPTMADELYDQDYPIYSVEDRHKLAAQGKFVTTEFEPCFDAADFIRAGRDIFAQRSQVTNYMGIEWMRKHLAPDYRVHIISFKDPNPMHIDATFNIIGPGLVLSNPDRPCHQIDLFKKAGWTIVTPPIPVIPDDHPLWMSSKWLSMNVLMLDEKRVMVDANEVPIQKMFEKLGISTIKISIRNANSLGGGFHCWTCDVRRRGTLQSYFD</sequence>
<gene>
    <name type="primary">GATM</name>
    <name type="synonym">AGAT</name>
</gene>
<organism>
    <name type="scientific">Sus scrofa</name>
    <name type="common">Pig</name>
    <dbReference type="NCBI Taxonomy" id="9823"/>
    <lineage>
        <taxon>Eukaryota</taxon>
        <taxon>Metazoa</taxon>
        <taxon>Chordata</taxon>
        <taxon>Craniata</taxon>
        <taxon>Vertebrata</taxon>
        <taxon>Euteleostomi</taxon>
        <taxon>Mammalia</taxon>
        <taxon>Eutheria</taxon>
        <taxon>Laurasiatheria</taxon>
        <taxon>Artiodactyla</taxon>
        <taxon>Suina</taxon>
        <taxon>Suidae</taxon>
        <taxon>Sus</taxon>
    </lineage>
</organism>
<reference key="1">
    <citation type="journal article" date="2007" name="Genes Genet. Syst.">
        <title>Imprinting analyses of the porcine GATM and PEG10 genes in placentas on days 75 and 90 of gestation.</title>
        <authorList>
            <person name="Zhou Q.Y."/>
            <person name="Huang J.N."/>
            <person name="Xiong Y.Z."/>
            <person name="Zhao S.H."/>
        </authorList>
    </citation>
    <scope>NUCLEOTIDE SEQUENCE [MRNA]</scope>
    <scope>TISSUE SPECIFICITY</scope>
    <scope>DEVELOPMENTAL STAGE</scope>
</reference>
<reference key="2">
    <citation type="journal article" date="1994" name="FEBS Lett.">
        <title>The amino acid sequences of human and pig L-arginine:glycine amidinotransferase.</title>
        <authorList>
            <person name="Humm A."/>
            <person name="Huber R."/>
            <person name="Mann K."/>
        </authorList>
    </citation>
    <scope>PROTEIN SEQUENCE OF 38-423</scope>
    <source>
        <tissue>Kidney</tissue>
    </source>
</reference>
<reference key="3">
    <citation type="submission" date="2004-05" db="EMBL/GenBank/DDBJ databases">
        <title>The comparative cDNA sequences of some mammalian kidney L-arginine:glycine amidinotransferase genes and their evolutionary significance.</title>
        <authorList>
            <person name="Zink R.M."/>
            <person name="Westberg M.C."/>
            <person name="Van Pilsum J.F."/>
        </authorList>
    </citation>
    <scope>NUCLEOTIDE SEQUENCE [MRNA] OF 123-362</scope>
</reference>
<evidence type="ECO:0000250" key="1"/>
<evidence type="ECO:0000250" key="2">
    <source>
        <dbReference type="UniProtKB" id="P50440"/>
    </source>
</evidence>
<evidence type="ECO:0000269" key="3">
    <source>
    </source>
</evidence>
<evidence type="ECO:0000269" key="4">
    <source>
    </source>
</evidence>
<evidence type="ECO:0000305" key="5"/>
<dbReference type="EC" id="2.1.4.1" evidence="2"/>
<dbReference type="EMBL" id="EF612462">
    <property type="protein sequence ID" value="ABS83814.1"/>
    <property type="molecule type" value="mRNA"/>
</dbReference>
<dbReference type="EMBL" id="AY625268">
    <property type="protein sequence ID" value="AAT39894.1"/>
    <property type="molecule type" value="mRNA"/>
</dbReference>
<dbReference type="PIR" id="S40296">
    <property type="entry name" value="S40296"/>
</dbReference>
<dbReference type="RefSeq" id="NP_001121914.1">
    <property type="nucleotide sequence ID" value="NM_001128442.1"/>
</dbReference>
<dbReference type="SMR" id="P50441"/>
<dbReference type="FunCoup" id="P50441">
    <property type="interactions" value="230"/>
</dbReference>
<dbReference type="STRING" id="9823.ENSSSCP00000005032"/>
<dbReference type="PaxDb" id="9823-ENSSSCP00000005032"/>
<dbReference type="PeptideAtlas" id="P50441"/>
<dbReference type="Ensembl" id="ENSSSCT00000005158.5">
    <property type="protein sequence ID" value="ENSSSCP00000005032.2"/>
    <property type="gene ID" value="ENSSSCG00000004672.5"/>
</dbReference>
<dbReference type="Ensembl" id="ENSSSCT00015063751.1">
    <property type="protein sequence ID" value="ENSSSCP00015025524.1"/>
    <property type="gene ID" value="ENSSSCG00015047679.1"/>
</dbReference>
<dbReference type="Ensembl" id="ENSSSCT00025066098.1">
    <property type="protein sequence ID" value="ENSSSCP00025028231.1"/>
    <property type="gene ID" value="ENSSSCG00025048545.1"/>
</dbReference>
<dbReference type="Ensembl" id="ENSSSCT00030086703.1">
    <property type="protein sequence ID" value="ENSSSCP00030039989.1"/>
    <property type="gene ID" value="ENSSSCG00030062004.1"/>
</dbReference>
<dbReference type="Ensembl" id="ENSSSCT00035040519.1">
    <property type="protein sequence ID" value="ENSSSCP00035016203.1"/>
    <property type="gene ID" value="ENSSSCG00035030607.1"/>
</dbReference>
<dbReference type="Ensembl" id="ENSSSCT00040082194.1">
    <property type="protein sequence ID" value="ENSSSCP00040035776.1"/>
    <property type="gene ID" value="ENSSSCG00040060383.1"/>
</dbReference>
<dbReference type="Ensembl" id="ENSSSCT00045002451.1">
    <property type="protein sequence ID" value="ENSSSCP00045001568.1"/>
    <property type="gene ID" value="ENSSSCG00045001532.1"/>
</dbReference>
<dbReference type="Ensembl" id="ENSSSCT00050108069.1">
    <property type="protein sequence ID" value="ENSSSCP00050047870.1"/>
    <property type="gene ID" value="ENSSSCG00050078417.1"/>
</dbReference>
<dbReference type="Ensembl" id="ENSSSCT00055025689.1">
    <property type="protein sequence ID" value="ENSSSCP00055020416.1"/>
    <property type="gene ID" value="ENSSSCG00055013048.1"/>
</dbReference>
<dbReference type="Ensembl" id="ENSSSCT00060056129.1">
    <property type="protein sequence ID" value="ENSSSCP00060023980.1"/>
    <property type="gene ID" value="ENSSSCG00060041404.1"/>
</dbReference>
<dbReference type="Ensembl" id="ENSSSCT00065078180.1">
    <property type="protein sequence ID" value="ENSSSCP00065034003.1"/>
    <property type="gene ID" value="ENSSSCG00065057102.1"/>
</dbReference>
<dbReference type="Ensembl" id="ENSSSCT00070000066.1">
    <property type="protein sequence ID" value="ENSSSCP00070000060.1"/>
    <property type="gene ID" value="ENSSSCG00070000042.1"/>
</dbReference>
<dbReference type="Ensembl" id="ENSSSCT00090054366">
    <property type="protein sequence ID" value="ENSSSCP00090033820"/>
    <property type="gene ID" value="ENSSSCG00090030707"/>
</dbReference>
<dbReference type="Ensembl" id="ENSSSCT00105072760">
    <property type="protein sequence ID" value="ENSSSCP00105051672"/>
    <property type="gene ID" value="ENSSSCG00105038061"/>
</dbReference>
<dbReference type="Ensembl" id="ENSSSCT00110003424">
    <property type="protein sequence ID" value="ENSSSCP00110002705"/>
    <property type="gene ID" value="ENSSSCG00110001645"/>
</dbReference>
<dbReference type="Ensembl" id="ENSSSCT00115006228">
    <property type="protein sequence ID" value="ENSSSCP00115005818"/>
    <property type="gene ID" value="ENSSSCG00115003652"/>
</dbReference>
<dbReference type="Ensembl" id="ENSSSCT00130069254">
    <property type="protein sequence ID" value="ENSSSCP00130049804"/>
    <property type="gene ID" value="ENSSSCG00130035428"/>
</dbReference>
<dbReference type="GeneID" id="100126844"/>
<dbReference type="KEGG" id="ssc:100126844"/>
<dbReference type="CTD" id="2628"/>
<dbReference type="VGNC" id="VGNC:88372">
    <property type="gene designation" value="GATM"/>
</dbReference>
<dbReference type="eggNOG" id="ENOG502QVCA">
    <property type="taxonomic scope" value="Eukaryota"/>
</dbReference>
<dbReference type="GeneTree" id="ENSGT00390000011613"/>
<dbReference type="HOGENOM" id="CLU_047415_1_0_1"/>
<dbReference type="InParanoid" id="P50441"/>
<dbReference type="OMA" id="YPIHIDA"/>
<dbReference type="OrthoDB" id="10264242at2759"/>
<dbReference type="TreeFam" id="TF300256"/>
<dbReference type="Reactome" id="R-SSC-71288">
    <property type="pathway name" value="Creatine metabolism"/>
</dbReference>
<dbReference type="UniPathway" id="UPA00104">
    <property type="reaction ID" value="UER00579"/>
</dbReference>
<dbReference type="Proteomes" id="UP000008227">
    <property type="component" value="Chromosome 1"/>
</dbReference>
<dbReference type="Proteomes" id="UP000314985">
    <property type="component" value="Chromosome 1"/>
</dbReference>
<dbReference type="Proteomes" id="UP000694570">
    <property type="component" value="Unplaced"/>
</dbReference>
<dbReference type="Proteomes" id="UP000694571">
    <property type="component" value="Unplaced"/>
</dbReference>
<dbReference type="Proteomes" id="UP000694720">
    <property type="component" value="Unplaced"/>
</dbReference>
<dbReference type="Proteomes" id="UP000694722">
    <property type="component" value="Unplaced"/>
</dbReference>
<dbReference type="Proteomes" id="UP000694723">
    <property type="component" value="Unplaced"/>
</dbReference>
<dbReference type="Proteomes" id="UP000694724">
    <property type="component" value="Unplaced"/>
</dbReference>
<dbReference type="Proteomes" id="UP000694725">
    <property type="component" value="Unplaced"/>
</dbReference>
<dbReference type="Proteomes" id="UP000694726">
    <property type="component" value="Unplaced"/>
</dbReference>
<dbReference type="Proteomes" id="UP000694727">
    <property type="component" value="Unplaced"/>
</dbReference>
<dbReference type="Proteomes" id="UP000694728">
    <property type="component" value="Unplaced"/>
</dbReference>
<dbReference type="Bgee" id="ENSSSCG00000004672">
    <property type="expression patterns" value="Expressed in metanephros cortex and 43 other cell types or tissues"/>
</dbReference>
<dbReference type="GO" id="GO:0005743">
    <property type="term" value="C:mitochondrial inner membrane"/>
    <property type="evidence" value="ECO:0007669"/>
    <property type="project" value="UniProtKB-SubCell"/>
</dbReference>
<dbReference type="GO" id="GO:0005758">
    <property type="term" value="C:mitochondrial intermembrane space"/>
    <property type="evidence" value="ECO:0000318"/>
    <property type="project" value="GO_Central"/>
</dbReference>
<dbReference type="GO" id="GO:0015067">
    <property type="term" value="F:amidinotransferase activity"/>
    <property type="evidence" value="ECO:0000250"/>
    <property type="project" value="UniProtKB"/>
</dbReference>
<dbReference type="GO" id="GO:0015068">
    <property type="term" value="F:glycine amidinotransferase activity"/>
    <property type="evidence" value="ECO:0000250"/>
    <property type="project" value="UniProtKB"/>
</dbReference>
<dbReference type="GO" id="GO:0006601">
    <property type="term" value="P:creatine biosynthetic process"/>
    <property type="evidence" value="ECO:0000318"/>
    <property type="project" value="GO_Central"/>
</dbReference>
<dbReference type="GO" id="GO:0007611">
    <property type="term" value="P:learning or memory"/>
    <property type="evidence" value="ECO:0007669"/>
    <property type="project" value="Ensembl"/>
</dbReference>
<dbReference type="GO" id="GO:0014889">
    <property type="term" value="P:muscle atrophy"/>
    <property type="evidence" value="ECO:0007669"/>
    <property type="project" value="Ensembl"/>
</dbReference>
<dbReference type="GO" id="GO:0120162">
    <property type="term" value="P:positive regulation of cold-induced thermogenesis"/>
    <property type="evidence" value="ECO:0007669"/>
    <property type="project" value="Ensembl"/>
</dbReference>
<dbReference type="CDD" id="cd21136">
    <property type="entry name" value="amidinotransferase_AGAT-like"/>
    <property type="match status" value="1"/>
</dbReference>
<dbReference type="FunFam" id="3.75.10.10:FF:000005">
    <property type="entry name" value="Glycine amidinotransferase, mitochondrial"/>
    <property type="match status" value="1"/>
</dbReference>
<dbReference type="Gene3D" id="3.75.10.10">
    <property type="entry name" value="L-arginine/glycine Amidinotransferase, Chain A"/>
    <property type="match status" value="1"/>
</dbReference>
<dbReference type="InterPro" id="IPR033195">
    <property type="entry name" value="AmidinoTrfase"/>
</dbReference>
<dbReference type="PANTHER" id="PTHR10488">
    <property type="entry name" value="GLYCINE AMIDINOTRANSFERASE, MITOCHONDRIAL"/>
    <property type="match status" value="1"/>
</dbReference>
<dbReference type="PANTHER" id="PTHR10488:SF1">
    <property type="entry name" value="GLYCINE AMIDINOTRANSFERASE, MITOCHONDRIAL"/>
    <property type="match status" value="1"/>
</dbReference>
<dbReference type="SUPFAM" id="SSF55909">
    <property type="entry name" value="Pentein"/>
    <property type="match status" value="1"/>
</dbReference>
<feature type="transit peptide" description="Mitochondrion" evidence="4">
    <location>
        <begin position="1"/>
        <end position="43"/>
    </location>
</feature>
<feature type="chain" id="PRO_0000215474" description="Glycine amidinotransferase, mitochondrial">
    <location>
        <begin position="44"/>
        <end position="423"/>
    </location>
</feature>
<feature type="active site" evidence="2">
    <location>
        <position position="254"/>
    </location>
</feature>
<feature type="active site" evidence="2">
    <location>
        <position position="303"/>
    </location>
</feature>
<feature type="active site" description="Amidino-cysteine intermediate" evidence="2">
    <location>
        <position position="407"/>
    </location>
</feature>
<feature type="binding site" evidence="2">
    <location>
        <position position="170"/>
    </location>
    <ligand>
        <name>arginine</name>
        <dbReference type="ChEBI" id="CHEBI:32696"/>
    </ligand>
</feature>
<feature type="binding site" evidence="2">
    <location>
        <position position="305"/>
    </location>
    <ligand>
        <name>arginine</name>
        <dbReference type="ChEBI" id="CHEBI:32696"/>
    </ligand>
</feature>
<feature type="binding site" evidence="2">
    <location>
        <position position="322"/>
    </location>
    <ligand>
        <name>arginine</name>
        <dbReference type="ChEBI" id="CHEBI:32696"/>
    </ligand>
</feature>
<feature type="binding site" evidence="2">
    <location>
        <position position="354"/>
    </location>
    <ligand>
        <name>arginine</name>
        <dbReference type="ChEBI" id="CHEBI:32696"/>
    </ligand>
</feature>
<feature type="binding site" evidence="2">
    <location>
        <position position="355"/>
    </location>
    <ligand>
        <name>arginine</name>
        <dbReference type="ChEBI" id="CHEBI:32696"/>
    </ligand>
</feature>
<feature type="modified residue" description="Phosphoserine" evidence="2">
    <location>
        <position position="46"/>
    </location>
</feature>
<feature type="modified residue" description="Phosphoserine" evidence="2">
    <location>
        <position position="49"/>
    </location>
</feature>
<feature type="modified residue" description="N6-acetyllysine" evidence="2">
    <location>
        <position position="385"/>
    </location>
</feature>
<keyword id="KW-0007">Acetylation</keyword>
<keyword id="KW-0903">Direct protein sequencing</keyword>
<keyword id="KW-0472">Membrane</keyword>
<keyword id="KW-0496">Mitochondrion</keyword>
<keyword id="KW-0999">Mitochondrion inner membrane</keyword>
<keyword id="KW-0597">Phosphoprotein</keyword>
<keyword id="KW-1185">Reference proteome</keyword>
<keyword id="KW-0808">Transferase</keyword>
<keyword id="KW-0809">Transit peptide</keyword>